<reference key="1">
    <citation type="journal article" date="2005" name="Science">
        <title>The transcriptional landscape of the mammalian genome.</title>
        <authorList>
            <person name="Carninci P."/>
            <person name="Kasukawa T."/>
            <person name="Katayama S."/>
            <person name="Gough J."/>
            <person name="Frith M.C."/>
            <person name="Maeda N."/>
            <person name="Oyama R."/>
            <person name="Ravasi T."/>
            <person name="Lenhard B."/>
            <person name="Wells C."/>
            <person name="Kodzius R."/>
            <person name="Shimokawa K."/>
            <person name="Bajic V.B."/>
            <person name="Brenner S.E."/>
            <person name="Batalov S."/>
            <person name="Forrest A.R."/>
            <person name="Zavolan M."/>
            <person name="Davis M.J."/>
            <person name="Wilming L.G."/>
            <person name="Aidinis V."/>
            <person name="Allen J.E."/>
            <person name="Ambesi-Impiombato A."/>
            <person name="Apweiler R."/>
            <person name="Aturaliya R.N."/>
            <person name="Bailey T.L."/>
            <person name="Bansal M."/>
            <person name="Baxter L."/>
            <person name="Beisel K.W."/>
            <person name="Bersano T."/>
            <person name="Bono H."/>
            <person name="Chalk A.M."/>
            <person name="Chiu K.P."/>
            <person name="Choudhary V."/>
            <person name="Christoffels A."/>
            <person name="Clutterbuck D.R."/>
            <person name="Crowe M.L."/>
            <person name="Dalla E."/>
            <person name="Dalrymple B.P."/>
            <person name="de Bono B."/>
            <person name="Della Gatta G."/>
            <person name="di Bernardo D."/>
            <person name="Down T."/>
            <person name="Engstrom P."/>
            <person name="Fagiolini M."/>
            <person name="Faulkner G."/>
            <person name="Fletcher C.F."/>
            <person name="Fukushima T."/>
            <person name="Furuno M."/>
            <person name="Futaki S."/>
            <person name="Gariboldi M."/>
            <person name="Georgii-Hemming P."/>
            <person name="Gingeras T.R."/>
            <person name="Gojobori T."/>
            <person name="Green R.E."/>
            <person name="Gustincich S."/>
            <person name="Harbers M."/>
            <person name="Hayashi Y."/>
            <person name="Hensch T.K."/>
            <person name="Hirokawa N."/>
            <person name="Hill D."/>
            <person name="Huminiecki L."/>
            <person name="Iacono M."/>
            <person name="Ikeo K."/>
            <person name="Iwama A."/>
            <person name="Ishikawa T."/>
            <person name="Jakt M."/>
            <person name="Kanapin A."/>
            <person name="Katoh M."/>
            <person name="Kawasawa Y."/>
            <person name="Kelso J."/>
            <person name="Kitamura H."/>
            <person name="Kitano H."/>
            <person name="Kollias G."/>
            <person name="Krishnan S.P."/>
            <person name="Kruger A."/>
            <person name="Kummerfeld S.K."/>
            <person name="Kurochkin I.V."/>
            <person name="Lareau L.F."/>
            <person name="Lazarevic D."/>
            <person name="Lipovich L."/>
            <person name="Liu J."/>
            <person name="Liuni S."/>
            <person name="McWilliam S."/>
            <person name="Madan Babu M."/>
            <person name="Madera M."/>
            <person name="Marchionni L."/>
            <person name="Matsuda H."/>
            <person name="Matsuzawa S."/>
            <person name="Miki H."/>
            <person name="Mignone F."/>
            <person name="Miyake S."/>
            <person name="Morris K."/>
            <person name="Mottagui-Tabar S."/>
            <person name="Mulder N."/>
            <person name="Nakano N."/>
            <person name="Nakauchi H."/>
            <person name="Ng P."/>
            <person name="Nilsson R."/>
            <person name="Nishiguchi S."/>
            <person name="Nishikawa S."/>
            <person name="Nori F."/>
            <person name="Ohara O."/>
            <person name="Okazaki Y."/>
            <person name="Orlando V."/>
            <person name="Pang K.C."/>
            <person name="Pavan W.J."/>
            <person name="Pavesi G."/>
            <person name="Pesole G."/>
            <person name="Petrovsky N."/>
            <person name="Piazza S."/>
            <person name="Reed J."/>
            <person name="Reid J.F."/>
            <person name="Ring B.Z."/>
            <person name="Ringwald M."/>
            <person name="Rost B."/>
            <person name="Ruan Y."/>
            <person name="Salzberg S.L."/>
            <person name="Sandelin A."/>
            <person name="Schneider C."/>
            <person name="Schoenbach C."/>
            <person name="Sekiguchi K."/>
            <person name="Semple C.A."/>
            <person name="Seno S."/>
            <person name="Sessa L."/>
            <person name="Sheng Y."/>
            <person name="Shibata Y."/>
            <person name="Shimada H."/>
            <person name="Shimada K."/>
            <person name="Silva D."/>
            <person name="Sinclair B."/>
            <person name="Sperling S."/>
            <person name="Stupka E."/>
            <person name="Sugiura K."/>
            <person name="Sultana R."/>
            <person name="Takenaka Y."/>
            <person name="Taki K."/>
            <person name="Tammoja K."/>
            <person name="Tan S.L."/>
            <person name="Tang S."/>
            <person name="Taylor M.S."/>
            <person name="Tegner J."/>
            <person name="Teichmann S.A."/>
            <person name="Ueda H.R."/>
            <person name="van Nimwegen E."/>
            <person name="Verardo R."/>
            <person name="Wei C.L."/>
            <person name="Yagi K."/>
            <person name="Yamanishi H."/>
            <person name="Zabarovsky E."/>
            <person name="Zhu S."/>
            <person name="Zimmer A."/>
            <person name="Hide W."/>
            <person name="Bult C."/>
            <person name="Grimmond S.M."/>
            <person name="Teasdale R.D."/>
            <person name="Liu E.T."/>
            <person name="Brusic V."/>
            <person name="Quackenbush J."/>
            <person name="Wahlestedt C."/>
            <person name="Mattick J.S."/>
            <person name="Hume D.A."/>
            <person name="Kai C."/>
            <person name="Sasaki D."/>
            <person name="Tomaru Y."/>
            <person name="Fukuda S."/>
            <person name="Kanamori-Katayama M."/>
            <person name="Suzuki M."/>
            <person name="Aoki J."/>
            <person name="Arakawa T."/>
            <person name="Iida J."/>
            <person name="Imamura K."/>
            <person name="Itoh M."/>
            <person name="Kato T."/>
            <person name="Kawaji H."/>
            <person name="Kawagashira N."/>
            <person name="Kawashima T."/>
            <person name="Kojima M."/>
            <person name="Kondo S."/>
            <person name="Konno H."/>
            <person name="Nakano K."/>
            <person name="Ninomiya N."/>
            <person name="Nishio T."/>
            <person name="Okada M."/>
            <person name="Plessy C."/>
            <person name="Shibata K."/>
            <person name="Shiraki T."/>
            <person name="Suzuki S."/>
            <person name="Tagami M."/>
            <person name="Waki K."/>
            <person name="Watahiki A."/>
            <person name="Okamura-Oho Y."/>
            <person name="Suzuki H."/>
            <person name="Kawai J."/>
            <person name="Hayashizaki Y."/>
        </authorList>
    </citation>
    <scope>NUCLEOTIDE SEQUENCE [LARGE SCALE MRNA]</scope>
    <source>
        <strain>C57BL/6J</strain>
        <tissue>Testis</tissue>
    </source>
</reference>
<reference key="2">
    <citation type="journal article" date="2009" name="PLoS Biol.">
        <title>Lineage-specific biology revealed by a finished genome assembly of the mouse.</title>
        <authorList>
            <person name="Church D.M."/>
            <person name="Goodstadt L."/>
            <person name="Hillier L.W."/>
            <person name="Zody M.C."/>
            <person name="Goldstein S."/>
            <person name="She X."/>
            <person name="Bult C.J."/>
            <person name="Agarwala R."/>
            <person name="Cherry J.L."/>
            <person name="DiCuccio M."/>
            <person name="Hlavina W."/>
            <person name="Kapustin Y."/>
            <person name="Meric P."/>
            <person name="Maglott D."/>
            <person name="Birtle Z."/>
            <person name="Marques A.C."/>
            <person name="Graves T."/>
            <person name="Zhou S."/>
            <person name="Teague B."/>
            <person name="Potamousis K."/>
            <person name="Churas C."/>
            <person name="Place M."/>
            <person name="Herschleb J."/>
            <person name="Runnheim R."/>
            <person name="Forrest D."/>
            <person name="Amos-Landgraf J."/>
            <person name="Schwartz D.C."/>
            <person name="Cheng Z."/>
            <person name="Lindblad-Toh K."/>
            <person name="Eichler E.E."/>
            <person name="Ponting C.P."/>
        </authorList>
    </citation>
    <scope>NUCLEOTIDE SEQUENCE [LARGE SCALE GENOMIC DNA]</scope>
    <source>
        <strain>C57BL/6J</strain>
    </source>
</reference>
<reference key="3">
    <citation type="submission" date="2005-09" db="EMBL/GenBank/DDBJ databases">
        <authorList>
            <person name="Mural R.J."/>
            <person name="Adams M.D."/>
            <person name="Myers E.W."/>
            <person name="Smith H.O."/>
            <person name="Venter J.C."/>
        </authorList>
    </citation>
    <scope>NUCLEOTIDE SEQUENCE [LARGE SCALE GENOMIC DNA]</scope>
</reference>
<protein>
    <recommendedName>
        <fullName>Transmembrane domain-containing protein TMIGD3</fullName>
    </recommendedName>
</protein>
<dbReference type="EMBL" id="AK005581">
    <property type="protein sequence ID" value="BAB24135.1"/>
    <property type="molecule type" value="mRNA"/>
</dbReference>
<dbReference type="EMBL" id="AC121847">
    <property type="status" value="NOT_ANNOTATED_CDS"/>
    <property type="molecule type" value="Genomic_DNA"/>
</dbReference>
<dbReference type="EMBL" id="CH466608">
    <property type="protein sequence ID" value="EDL07540.1"/>
    <property type="molecule type" value="Genomic_DNA"/>
</dbReference>
<dbReference type="CCDS" id="CCDS38582.1"/>
<dbReference type="RefSeq" id="NP_081301.2">
    <property type="nucleotide sequence ID" value="NM_027025.4"/>
</dbReference>
<dbReference type="SMR" id="G3X8R9"/>
<dbReference type="FunCoup" id="G3X8R9">
    <property type="interactions" value="867"/>
</dbReference>
<dbReference type="STRING" id="10090.ENSMUSP00000010279"/>
<dbReference type="PhosphoSitePlus" id="G3X8R9"/>
<dbReference type="PaxDb" id="10090-ENSMUSP00000010279"/>
<dbReference type="ProteomicsDB" id="259255"/>
<dbReference type="Antibodypedia" id="20120">
    <property type="antibodies" value="78 antibodies from 16 providers"/>
</dbReference>
<dbReference type="DNASU" id="11542"/>
<dbReference type="Ensembl" id="ENSMUST00000010279.10">
    <property type="protein sequence ID" value="ENSMUSP00000010279.5"/>
    <property type="gene ID" value="ENSMUSG00000074344.8"/>
</dbReference>
<dbReference type="Ensembl" id="ENSMUST00000198080.5">
    <property type="protein sequence ID" value="ENSMUSP00000143300.2"/>
    <property type="gene ID" value="ENSMUSG00000074344.8"/>
</dbReference>
<dbReference type="GeneID" id="69296"/>
<dbReference type="KEGG" id="mmu:69296"/>
<dbReference type="UCSC" id="uc008qvh.3">
    <property type="organism name" value="mouse"/>
</dbReference>
<dbReference type="AGR" id="MGI:5604098"/>
<dbReference type="CTD" id="57413"/>
<dbReference type="MGI" id="MGI:5604098">
    <property type="gene designation" value="Tmigd3"/>
</dbReference>
<dbReference type="VEuPathDB" id="HostDB:ENSMUSG00000074344"/>
<dbReference type="eggNOG" id="KOG3656">
    <property type="taxonomic scope" value="Eukaryota"/>
</dbReference>
<dbReference type="GeneTree" id="ENSGT00930000151073"/>
<dbReference type="InParanoid" id="G3X8R9"/>
<dbReference type="OMA" id="GLARDFW"/>
<dbReference type="OrthoDB" id="284782at2759"/>
<dbReference type="PhylomeDB" id="G3X8R9"/>
<dbReference type="TreeFam" id="TF334441"/>
<dbReference type="BioGRID-ORCS" id="69296">
    <property type="hits" value="0 hits in 32 CRISPR screens"/>
</dbReference>
<dbReference type="PRO" id="PR:G3X8R9"/>
<dbReference type="Proteomes" id="UP000000589">
    <property type="component" value="Chromosome 3"/>
</dbReference>
<dbReference type="RNAct" id="G3X8R9">
    <property type="molecule type" value="protein"/>
</dbReference>
<dbReference type="Bgee" id="ENSMUSG00000074344">
    <property type="expression patterns" value="Expressed in spermatid and 20 other cell types or tissues"/>
</dbReference>
<dbReference type="ExpressionAtlas" id="G3X8R9">
    <property type="expression patterns" value="baseline and differential"/>
</dbReference>
<dbReference type="GO" id="GO:0016020">
    <property type="term" value="C:membrane"/>
    <property type="evidence" value="ECO:0007669"/>
    <property type="project" value="UniProtKB-SubCell"/>
</dbReference>
<dbReference type="Gene3D" id="2.60.40.10">
    <property type="entry name" value="Immunoglobulins"/>
    <property type="match status" value="1"/>
</dbReference>
<dbReference type="InterPro" id="IPR050671">
    <property type="entry name" value="CD300_family_receptors"/>
</dbReference>
<dbReference type="InterPro" id="IPR036179">
    <property type="entry name" value="Ig-like_dom_sf"/>
</dbReference>
<dbReference type="InterPro" id="IPR013783">
    <property type="entry name" value="Ig-like_fold"/>
</dbReference>
<dbReference type="PANTHER" id="PTHR11860">
    <property type="entry name" value="POLYMERIC-IMMUNOGLOBULIN RECEPTOR"/>
    <property type="match status" value="1"/>
</dbReference>
<dbReference type="PANTHER" id="PTHR11860:SF4">
    <property type="entry name" value="TRANSMEMBRANE DOMAIN-CONTAINING PROTEIN TMIGD3"/>
    <property type="match status" value="1"/>
</dbReference>
<dbReference type="SUPFAM" id="SSF48726">
    <property type="entry name" value="Immunoglobulin"/>
    <property type="match status" value="1"/>
</dbReference>
<accession>G3X8R9</accession>
<accession>Q9DAR9</accession>
<gene>
    <name type="primary">Tmigd3</name>
</gene>
<keyword id="KW-0472">Membrane</keyword>
<keyword id="KW-1185">Reference proteome</keyword>
<keyword id="KW-0732">Signal</keyword>
<keyword id="KW-0812">Transmembrane</keyword>
<keyword id="KW-1133">Transmembrane helix</keyword>
<evidence type="ECO:0000250" key="1">
    <source>
        <dbReference type="UniProtKB" id="P0DMS9"/>
    </source>
</evidence>
<evidence type="ECO:0000255" key="2"/>
<evidence type="ECO:0000256" key="3">
    <source>
        <dbReference type="SAM" id="MobiDB-lite"/>
    </source>
</evidence>
<evidence type="ECO:0000305" key="4"/>
<comment type="subcellular location">
    <subcellularLocation>
        <location evidence="1">Membrane</location>
        <topology evidence="2">Single-pass type I membrane protein</topology>
    </subcellularLocation>
</comment>
<feature type="signal peptide" evidence="2">
    <location>
        <begin position="1"/>
        <end position="15"/>
    </location>
</feature>
<feature type="chain" id="PRO_0000441841" description="Transmembrane domain-containing protein TMIGD3">
    <location>
        <begin position="16"/>
        <end position="209"/>
    </location>
</feature>
<feature type="transmembrane region" description="Helical" evidence="2">
    <location>
        <begin position="152"/>
        <end position="172"/>
    </location>
</feature>
<feature type="region of interest" description="Disordered" evidence="3">
    <location>
        <begin position="179"/>
        <end position="201"/>
    </location>
</feature>
<feature type="compositionally biased region" description="Polar residues" evidence="3">
    <location>
        <begin position="187"/>
        <end position="201"/>
    </location>
</feature>
<feature type="sequence conflict" description="In Ref. 1; BAB24135." evidence="4" ref="1">
    <original>I</original>
    <variation>V</variation>
    <location>
        <position position="80"/>
    </location>
</feature>
<name>TMIG3_MOUSE</name>
<organism>
    <name type="scientific">Mus musculus</name>
    <name type="common">Mouse</name>
    <dbReference type="NCBI Taxonomy" id="10090"/>
    <lineage>
        <taxon>Eukaryota</taxon>
        <taxon>Metazoa</taxon>
        <taxon>Chordata</taxon>
        <taxon>Craniata</taxon>
        <taxon>Vertebrata</taxon>
        <taxon>Euteleostomi</taxon>
        <taxon>Mammalia</taxon>
        <taxon>Eutheria</taxon>
        <taxon>Euarchontoglires</taxon>
        <taxon>Glires</taxon>
        <taxon>Rodentia</taxon>
        <taxon>Myomorpha</taxon>
        <taxon>Muroidea</taxon>
        <taxon>Muridae</taxon>
        <taxon>Murinae</taxon>
        <taxon>Mus</taxon>
        <taxon>Mus</taxon>
    </lineage>
</organism>
<proteinExistence type="evidence at transcript level"/>
<sequence length="209" mass="23452">MEFLLLLSLALFSDAMVMDEKVKSGVELETASAVCVYDAYYKDHTKYWCRGYFRDSCNIIAFTPNSTNRVALKDTGNQLIITISCLVKEDTGWYWCGIQRDLARDDMDFTQLIVTDNREDRANGFSSDPSGNRTRSCRASKAVQKAEGSRMSILIICILITSLGIIFIISHLSRGRRSQRNREVTGKSISRNPQASQGPSMVSITLARI</sequence>